<keyword id="KW-0067">ATP-binding</keyword>
<keyword id="KW-0436">Ligase</keyword>
<keyword id="KW-0460">Magnesium</keyword>
<keyword id="KW-0479">Metal-binding</keyword>
<keyword id="KW-0547">Nucleotide-binding</keyword>
<keyword id="KW-0833">Ubl conjugation pathway</keyword>
<gene>
    <name evidence="1" type="primary">pafA</name>
    <name type="ordered locus">Sked_20850</name>
</gene>
<accession>D1BHT7</accession>
<sequence>MSTRRIFGLETEYGITCAAPPGQQGLSADEVARYLFRKVVAWGRSSNVFLRNGSRLYLDVGSHPEYATAECDDIRQLITYDRGGERILEGLVADAQQRLELEGVPGTIHLFKNNTDSAGNSYGCHENYLVRRQGDFTRLADILVPFLITRQVLTGAGKILTTPAGATFCLSQRADHIWESVSSATTRSRPIINTRDEPHADAELYRRLHVIVGDSSMAEPTAMLKVGATDMVLRMIEAGVPMRDMALENPMRAIREISHDMTGKAPITLASGRTVTAVDLQQEYLVKVRDFVESTGEVSDTDRKVFDLWERGLLALQSGDLTSVERELDWVIKHRLVRRYQEKHSLELSDPRIARLDLAYHDISRTEGLYNLLAARGLVERVTSDVEVLESTAVPPQTTRARLRGEFVRRAQEAKRDYTVDWVHLKLNDQAQRTVLCKDPFQSVDERVDRLIESM</sequence>
<dbReference type="EC" id="6.3.1.19" evidence="1"/>
<dbReference type="EMBL" id="CP001819">
    <property type="protein sequence ID" value="ACZ22007.1"/>
    <property type="molecule type" value="Genomic_DNA"/>
</dbReference>
<dbReference type="RefSeq" id="WP_012867076.1">
    <property type="nucleotide sequence ID" value="NC_013521.1"/>
</dbReference>
<dbReference type="SMR" id="D1BHT7"/>
<dbReference type="STRING" id="446469.Sked_20850"/>
<dbReference type="MEROPS" id="U72.001"/>
<dbReference type="KEGG" id="ske:Sked_20850"/>
<dbReference type="eggNOG" id="COG0638">
    <property type="taxonomic scope" value="Bacteria"/>
</dbReference>
<dbReference type="HOGENOM" id="CLU_040524_0_1_11"/>
<dbReference type="OrthoDB" id="9760627at2"/>
<dbReference type="UniPathway" id="UPA00997"/>
<dbReference type="UniPathway" id="UPA00998"/>
<dbReference type="Proteomes" id="UP000000322">
    <property type="component" value="Chromosome"/>
</dbReference>
<dbReference type="GO" id="GO:0005524">
    <property type="term" value="F:ATP binding"/>
    <property type="evidence" value="ECO:0007669"/>
    <property type="project" value="UniProtKB-UniRule"/>
</dbReference>
<dbReference type="GO" id="GO:0016879">
    <property type="term" value="F:ligase activity, forming carbon-nitrogen bonds"/>
    <property type="evidence" value="ECO:0007669"/>
    <property type="project" value="InterPro"/>
</dbReference>
<dbReference type="GO" id="GO:0000287">
    <property type="term" value="F:magnesium ion binding"/>
    <property type="evidence" value="ECO:0007669"/>
    <property type="project" value="UniProtKB-UniRule"/>
</dbReference>
<dbReference type="GO" id="GO:0019787">
    <property type="term" value="F:ubiquitin-like protein transferase activity"/>
    <property type="evidence" value="ECO:0007669"/>
    <property type="project" value="UniProtKB-UniRule"/>
</dbReference>
<dbReference type="GO" id="GO:0019941">
    <property type="term" value="P:modification-dependent protein catabolic process"/>
    <property type="evidence" value="ECO:0007669"/>
    <property type="project" value="UniProtKB-UniRule"/>
</dbReference>
<dbReference type="GO" id="GO:0010498">
    <property type="term" value="P:proteasomal protein catabolic process"/>
    <property type="evidence" value="ECO:0007669"/>
    <property type="project" value="UniProtKB-UniRule"/>
</dbReference>
<dbReference type="GO" id="GO:0070490">
    <property type="term" value="P:protein pupylation"/>
    <property type="evidence" value="ECO:0007669"/>
    <property type="project" value="UniProtKB-UniRule"/>
</dbReference>
<dbReference type="HAMAP" id="MF_02111">
    <property type="entry name" value="Pup_ligase"/>
    <property type="match status" value="1"/>
</dbReference>
<dbReference type="InterPro" id="IPR022279">
    <property type="entry name" value="Pup_ligase"/>
</dbReference>
<dbReference type="InterPro" id="IPR004347">
    <property type="entry name" value="Pup_ligase/deamidase"/>
</dbReference>
<dbReference type="NCBIfam" id="TIGR03686">
    <property type="entry name" value="pupylate_PafA"/>
    <property type="match status" value="1"/>
</dbReference>
<dbReference type="PANTHER" id="PTHR42307">
    <property type="entry name" value="PUP DEAMIDASE/DEPUPYLASE"/>
    <property type="match status" value="1"/>
</dbReference>
<dbReference type="PANTHER" id="PTHR42307:SF3">
    <property type="entry name" value="PUP--PROTEIN LIGASE"/>
    <property type="match status" value="1"/>
</dbReference>
<dbReference type="Pfam" id="PF03136">
    <property type="entry name" value="Pup_ligase"/>
    <property type="match status" value="1"/>
</dbReference>
<dbReference type="PIRSF" id="PIRSF018077">
    <property type="entry name" value="UCP018077"/>
    <property type="match status" value="1"/>
</dbReference>
<evidence type="ECO:0000255" key="1">
    <source>
        <dbReference type="HAMAP-Rule" id="MF_02111"/>
    </source>
</evidence>
<reference key="1">
    <citation type="journal article" date="2009" name="Stand. Genomic Sci.">
        <title>Complete genome sequence of Sanguibacter keddieii type strain (ST-74).</title>
        <authorList>
            <person name="Ivanova N."/>
            <person name="Sikorski J."/>
            <person name="Sims D."/>
            <person name="Brettin T."/>
            <person name="Detter J.C."/>
            <person name="Han C."/>
            <person name="Lapidus A."/>
            <person name="Copeland A."/>
            <person name="Glavina Del Rio T."/>
            <person name="Nolan M."/>
            <person name="Chen F."/>
            <person name="Lucas S."/>
            <person name="Tice H."/>
            <person name="Cheng J.F."/>
            <person name="Bruce D."/>
            <person name="Goodwin L."/>
            <person name="Pitluck S."/>
            <person name="Pati A."/>
            <person name="Mavromatis K."/>
            <person name="Chen A."/>
            <person name="Palaniappan K."/>
            <person name="D'haeseleer P."/>
            <person name="Chain P."/>
            <person name="Bristow J."/>
            <person name="Eisen J.A."/>
            <person name="Markowitz V."/>
            <person name="Hugenholtz P."/>
            <person name="Goker M."/>
            <person name="Pukall R."/>
            <person name="Klenk H.P."/>
            <person name="Kyrpides N.C."/>
        </authorList>
    </citation>
    <scope>NUCLEOTIDE SEQUENCE [LARGE SCALE GENOMIC DNA]</scope>
    <source>
        <strain>ATCC 51767 / DSM 10542 / NCFB 3025 / ST-74</strain>
    </source>
</reference>
<protein>
    <recommendedName>
        <fullName evidence="1">Pup--protein ligase</fullName>
        <ecNumber evidence="1">6.3.1.19</ecNumber>
    </recommendedName>
    <alternativeName>
        <fullName evidence="1">Proteasome accessory factor A</fullName>
    </alternativeName>
    <alternativeName>
        <fullName evidence="1">Pup-conjugating enzyme</fullName>
    </alternativeName>
</protein>
<proteinExistence type="inferred from homology"/>
<organism>
    <name type="scientific">Sanguibacter keddieii (strain ATCC 51767 / DSM 10542 / NCFB 3025 / ST-74)</name>
    <dbReference type="NCBI Taxonomy" id="446469"/>
    <lineage>
        <taxon>Bacteria</taxon>
        <taxon>Bacillati</taxon>
        <taxon>Actinomycetota</taxon>
        <taxon>Actinomycetes</taxon>
        <taxon>Micrococcales</taxon>
        <taxon>Sanguibacteraceae</taxon>
        <taxon>Sanguibacter</taxon>
    </lineage>
</organism>
<name>PAFA_SANKS</name>
<feature type="chain" id="PRO_0000395954" description="Pup--protein ligase">
    <location>
        <begin position="1"/>
        <end position="455"/>
    </location>
</feature>
<feature type="active site" description="Proton acceptor" evidence="1">
    <location>
        <position position="59"/>
    </location>
</feature>
<feature type="binding site" evidence="1">
    <location>
        <position position="10"/>
    </location>
    <ligand>
        <name>Mg(2+)</name>
        <dbReference type="ChEBI" id="CHEBI:18420"/>
    </ligand>
</feature>
<feature type="binding site" evidence="1">
    <location>
        <position position="55"/>
    </location>
    <ligand>
        <name>ATP</name>
        <dbReference type="ChEBI" id="CHEBI:30616"/>
    </ligand>
</feature>
<feature type="binding site" evidence="1">
    <location>
        <position position="57"/>
    </location>
    <ligand>
        <name>Mg(2+)</name>
        <dbReference type="ChEBI" id="CHEBI:18420"/>
    </ligand>
</feature>
<feature type="binding site" evidence="1">
    <location>
        <position position="65"/>
    </location>
    <ligand>
        <name>Mg(2+)</name>
        <dbReference type="ChEBI" id="CHEBI:18420"/>
    </ligand>
</feature>
<feature type="binding site" evidence="1">
    <location>
        <position position="68"/>
    </location>
    <ligand>
        <name>ATP</name>
        <dbReference type="ChEBI" id="CHEBI:30616"/>
    </ligand>
</feature>
<feature type="binding site" evidence="1">
    <location>
        <position position="422"/>
    </location>
    <ligand>
        <name>ATP</name>
        <dbReference type="ChEBI" id="CHEBI:30616"/>
    </ligand>
</feature>
<comment type="function">
    <text evidence="1">Catalyzes the covalent attachment of the prokaryotic ubiquitin-like protein modifier Pup to the proteasomal substrate proteins, thereby targeting them for proteasomal degradation. This tagging system is termed pupylation. The ligation reaction involves the side-chain carboxylate of the C-terminal glutamate of Pup and the side-chain amino group of a substrate lysine.</text>
</comment>
<comment type="catalytic activity">
    <reaction evidence="1">
        <text>ATP + [prokaryotic ubiquitin-like protein]-L-glutamate + [protein]-L-lysine = ADP + phosphate + N(6)-([prokaryotic ubiquitin-like protein]-gamma-L-glutamyl)-[protein]-L-lysine.</text>
        <dbReference type="EC" id="6.3.1.19"/>
    </reaction>
</comment>
<comment type="pathway">
    <text evidence="1">Protein degradation; proteasomal Pup-dependent pathway.</text>
</comment>
<comment type="pathway">
    <text evidence="1">Protein modification; protein pupylation.</text>
</comment>
<comment type="miscellaneous">
    <text evidence="1">The reaction mechanism probably proceeds via the activation of Pup by phosphorylation of its C-terminal glutamate, which is then subject to nucleophilic attack by the substrate lysine, resulting in an isopeptide bond and the release of phosphate as a good leaving group.</text>
</comment>
<comment type="similarity">
    <text evidence="1">Belongs to the Pup ligase/Pup deamidase family. Pup-conjugating enzyme subfamily.</text>
</comment>